<reference key="1">
    <citation type="journal article" date="1996" name="DNA Res.">
        <title>Sequence analysis of the genome of the unicellular cyanobacterium Synechocystis sp. strain PCC6803. II. Sequence determination of the entire genome and assignment of potential protein-coding regions.</title>
        <authorList>
            <person name="Kaneko T."/>
            <person name="Sato S."/>
            <person name="Kotani H."/>
            <person name="Tanaka A."/>
            <person name="Asamizu E."/>
            <person name="Nakamura Y."/>
            <person name="Miyajima N."/>
            <person name="Hirosawa M."/>
            <person name="Sugiura M."/>
            <person name="Sasamoto S."/>
            <person name="Kimura T."/>
            <person name="Hosouchi T."/>
            <person name="Matsuno A."/>
            <person name="Muraki A."/>
            <person name="Nakazaki N."/>
            <person name="Naruo K."/>
            <person name="Okumura S."/>
            <person name="Shimpo S."/>
            <person name="Takeuchi C."/>
            <person name="Wada T."/>
            <person name="Watanabe A."/>
            <person name="Yamada M."/>
            <person name="Yasuda M."/>
            <person name="Tabata S."/>
        </authorList>
    </citation>
    <scope>NUCLEOTIDE SEQUENCE [LARGE SCALE GENOMIC DNA]</scope>
    <source>
        <strain>ATCC 27184 / PCC 6803 / Kazusa</strain>
    </source>
</reference>
<feature type="chain" id="PRO_0000202139" description="Uncharacterized SufE-like protein slr1419">
    <location>
        <begin position="1"/>
        <end position="159"/>
    </location>
</feature>
<dbReference type="EMBL" id="BA000022">
    <property type="protein sequence ID" value="BAA18628.1"/>
    <property type="molecule type" value="Genomic_DNA"/>
</dbReference>
<dbReference type="PIR" id="S76716">
    <property type="entry name" value="S76716"/>
</dbReference>
<dbReference type="SMR" id="P74523"/>
<dbReference type="STRING" id="1148.gene:10500393"/>
<dbReference type="PaxDb" id="1148-1653717"/>
<dbReference type="EnsemblBacteria" id="BAA18628">
    <property type="protein sequence ID" value="BAA18628"/>
    <property type="gene ID" value="BAA18628"/>
</dbReference>
<dbReference type="KEGG" id="syn:slr1419"/>
<dbReference type="eggNOG" id="COG2166">
    <property type="taxonomic scope" value="Bacteria"/>
</dbReference>
<dbReference type="InParanoid" id="P74523"/>
<dbReference type="PhylomeDB" id="P74523"/>
<dbReference type="Proteomes" id="UP000001425">
    <property type="component" value="Chromosome"/>
</dbReference>
<dbReference type="Gene3D" id="3.90.1010.10">
    <property type="match status" value="1"/>
</dbReference>
<dbReference type="InterPro" id="IPR003808">
    <property type="entry name" value="Fe-S_metab-assoc_dom"/>
</dbReference>
<dbReference type="PANTHER" id="PTHR43597:SF5">
    <property type="entry name" value="SUFE-LIKE PROTEIN 2, CHLOROPLASTIC"/>
    <property type="match status" value="1"/>
</dbReference>
<dbReference type="PANTHER" id="PTHR43597">
    <property type="entry name" value="SULFUR ACCEPTOR PROTEIN CSDE"/>
    <property type="match status" value="1"/>
</dbReference>
<dbReference type="Pfam" id="PF02657">
    <property type="entry name" value="SufE"/>
    <property type="match status" value="1"/>
</dbReference>
<dbReference type="SUPFAM" id="SSF82649">
    <property type="entry name" value="SufE/NifU"/>
    <property type="match status" value="1"/>
</dbReference>
<name>Y1419_SYNY3</name>
<sequence length="159" mass="17684">MNRLSIIFPNLVMANATLPPNLAKIVERFQRHTDPKKRYEQLLWYGKKLEPMMEEGKIAANKVQGCVSQVYITADLEDGKVMYQGDSDAQLVKGLVALLIQGLNGLTPTEIVELTPDFIEATGLQVSLTPSRANGFYNIFKMMQTKAIAFQLGQSYGEG</sequence>
<evidence type="ECO:0000305" key="1"/>
<protein>
    <recommendedName>
        <fullName>Uncharacterized SufE-like protein slr1419</fullName>
    </recommendedName>
</protein>
<comment type="similarity">
    <text evidence="1">Belongs to the SufE family.</text>
</comment>
<proteinExistence type="inferred from homology"/>
<gene>
    <name type="ordered locus">slr1419</name>
</gene>
<organism>
    <name type="scientific">Synechocystis sp. (strain ATCC 27184 / PCC 6803 / Kazusa)</name>
    <dbReference type="NCBI Taxonomy" id="1111708"/>
    <lineage>
        <taxon>Bacteria</taxon>
        <taxon>Bacillati</taxon>
        <taxon>Cyanobacteriota</taxon>
        <taxon>Cyanophyceae</taxon>
        <taxon>Synechococcales</taxon>
        <taxon>Merismopediaceae</taxon>
        <taxon>Synechocystis</taxon>
    </lineage>
</organism>
<keyword id="KW-1185">Reference proteome</keyword>
<accession>P74523</accession>